<evidence type="ECO:0000255" key="1">
    <source>
        <dbReference type="HAMAP-Rule" id="MF_01690"/>
    </source>
</evidence>
<accession>A1B5Y2</accession>
<reference key="1">
    <citation type="submission" date="2006-12" db="EMBL/GenBank/DDBJ databases">
        <title>Complete sequence of chromosome 2 of Paracoccus denitrificans PD1222.</title>
        <authorList>
            <person name="Copeland A."/>
            <person name="Lucas S."/>
            <person name="Lapidus A."/>
            <person name="Barry K."/>
            <person name="Detter J.C."/>
            <person name="Glavina del Rio T."/>
            <person name="Hammon N."/>
            <person name="Israni S."/>
            <person name="Dalin E."/>
            <person name="Tice H."/>
            <person name="Pitluck S."/>
            <person name="Munk A.C."/>
            <person name="Brettin T."/>
            <person name="Bruce D."/>
            <person name="Han C."/>
            <person name="Tapia R."/>
            <person name="Gilna P."/>
            <person name="Schmutz J."/>
            <person name="Larimer F."/>
            <person name="Land M."/>
            <person name="Hauser L."/>
            <person name="Kyrpides N."/>
            <person name="Lykidis A."/>
            <person name="Spiro S."/>
            <person name="Richardson D.J."/>
            <person name="Moir J.W.B."/>
            <person name="Ferguson S.J."/>
            <person name="van Spanning R.J.M."/>
            <person name="Richardson P."/>
        </authorList>
    </citation>
    <scope>NUCLEOTIDE SEQUENCE [LARGE SCALE GENOMIC DNA]</scope>
    <source>
        <strain>Pd 1222</strain>
    </source>
</reference>
<proteinExistence type="inferred from homology"/>
<feature type="chain" id="PRO_0000375639" description="Succinyl-diaminopimelate desuccinylase">
    <location>
        <begin position="1"/>
        <end position="382"/>
    </location>
</feature>
<feature type="active site" evidence="1">
    <location>
        <position position="72"/>
    </location>
</feature>
<feature type="active site" description="Proton acceptor" evidence="1">
    <location>
        <position position="137"/>
    </location>
</feature>
<feature type="binding site" evidence="1">
    <location>
        <position position="70"/>
    </location>
    <ligand>
        <name>Zn(2+)</name>
        <dbReference type="ChEBI" id="CHEBI:29105"/>
        <label>1</label>
    </ligand>
</feature>
<feature type="binding site" evidence="1">
    <location>
        <position position="103"/>
    </location>
    <ligand>
        <name>Zn(2+)</name>
        <dbReference type="ChEBI" id="CHEBI:29105"/>
        <label>1</label>
    </ligand>
</feature>
<feature type="binding site" evidence="1">
    <location>
        <position position="103"/>
    </location>
    <ligand>
        <name>Zn(2+)</name>
        <dbReference type="ChEBI" id="CHEBI:29105"/>
        <label>2</label>
    </ligand>
</feature>
<feature type="binding site" evidence="1">
    <location>
        <position position="138"/>
    </location>
    <ligand>
        <name>Zn(2+)</name>
        <dbReference type="ChEBI" id="CHEBI:29105"/>
        <label>2</label>
    </ligand>
</feature>
<feature type="binding site" evidence="1">
    <location>
        <position position="166"/>
    </location>
    <ligand>
        <name>Zn(2+)</name>
        <dbReference type="ChEBI" id="CHEBI:29105"/>
        <label>1</label>
    </ligand>
</feature>
<feature type="binding site" evidence="1">
    <location>
        <position position="355"/>
    </location>
    <ligand>
        <name>Zn(2+)</name>
        <dbReference type="ChEBI" id="CHEBI:29105"/>
        <label>2</label>
    </ligand>
</feature>
<comment type="function">
    <text evidence="1">Catalyzes the hydrolysis of N-succinyl-L,L-diaminopimelic acid (SDAP), forming succinate and LL-2,6-diaminopimelate (DAP), an intermediate involved in the bacterial biosynthesis of lysine and meso-diaminopimelic acid, an essential component of bacterial cell walls.</text>
</comment>
<comment type="catalytic activity">
    <reaction evidence="1">
        <text>N-succinyl-(2S,6S)-2,6-diaminopimelate + H2O = (2S,6S)-2,6-diaminopimelate + succinate</text>
        <dbReference type="Rhea" id="RHEA:22608"/>
        <dbReference type="ChEBI" id="CHEBI:15377"/>
        <dbReference type="ChEBI" id="CHEBI:30031"/>
        <dbReference type="ChEBI" id="CHEBI:57609"/>
        <dbReference type="ChEBI" id="CHEBI:58087"/>
        <dbReference type="EC" id="3.5.1.18"/>
    </reaction>
</comment>
<comment type="cofactor">
    <cofactor evidence="1">
        <name>Zn(2+)</name>
        <dbReference type="ChEBI" id="CHEBI:29105"/>
    </cofactor>
    <cofactor evidence="1">
        <name>Co(2+)</name>
        <dbReference type="ChEBI" id="CHEBI:48828"/>
    </cofactor>
    <text evidence="1">Binds 2 Zn(2+) or Co(2+) ions per subunit.</text>
</comment>
<comment type="pathway">
    <text evidence="1">Amino-acid biosynthesis; L-lysine biosynthesis via DAP pathway; LL-2,6-diaminopimelate from (S)-tetrahydrodipicolinate (succinylase route): step 3/3.</text>
</comment>
<comment type="subunit">
    <text evidence="1">Homodimer.</text>
</comment>
<comment type="similarity">
    <text evidence="1">Belongs to the peptidase M20A family. DapE subfamily.</text>
</comment>
<organism>
    <name type="scientific">Paracoccus denitrificans (strain Pd 1222)</name>
    <dbReference type="NCBI Taxonomy" id="318586"/>
    <lineage>
        <taxon>Bacteria</taxon>
        <taxon>Pseudomonadati</taxon>
        <taxon>Pseudomonadota</taxon>
        <taxon>Alphaproteobacteria</taxon>
        <taxon>Rhodobacterales</taxon>
        <taxon>Paracoccaceae</taxon>
        <taxon>Paracoccus</taxon>
    </lineage>
</organism>
<keyword id="KW-0028">Amino-acid biosynthesis</keyword>
<keyword id="KW-0170">Cobalt</keyword>
<keyword id="KW-0220">Diaminopimelate biosynthesis</keyword>
<keyword id="KW-0378">Hydrolase</keyword>
<keyword id="KW-0457">Lysine biosynthesis</keyword>
<keyword id="KW-0479">Metal-binding</keyword>
<keyword id="KW-1185">Reference proteome</keyword>
<keyword id="KW-0862">Zinc</keyword>
<name>DAPE_PARDP</name>
<dbReference type="EC" id="3.5.1.18" evidence="1"/>
<dbReference type="EMBL" id="CP000490">
    <property type="protein sequence ID" value="ABL70926.1"/>
    <property type="molecule type" value="Genomic_DNA"/>
</dbReference>
<dbReference type="RefSeq" id="WP_011749117.1">
    <property type="nucleotide sequence ID" value="NC_008687.1"/>
</dbReference>
<dbReference type="SMR" id="A1B5Y2"/>
<dbReference type="STRING" id="318586.Pden_2842"/>
<dbReference type="EnsemblBacteria" id="ABL70926">
    <property type="protein sequence ID" value="ABL70926"/>
    <property type="gene ID" value="Pden_2842"/>
</dbReference>
<dbReference type="GeneID" id="93452522"/>
<dbReference type="KEGG" id="pde:Pden_2842"/>
<dbReference type="eggNOG" id="COG0624">
    <property type="taxonomic scope" value="Bacteria"/>
</dbReference>
<dbReference type="HOGENOM" id="CLU_021802_4_0_5"/>
<dbReference type="OrthoDB" id="9809784at2"/>
<dbReference type="UniPathway" id="UPA00034">
    <property type="reaction ID" value="UER00021"/>
</dbReference>
<dbReference type="Proteomes" id="UP000000361">
    <property type="component" value="Chromosome 2"/>
</dbReference>
<dbReference type="GO" id="GO:0008777">
    <property type="term" value="F:acetylornithine deacetylase activity"/>
    <property type="evidence" value="ECO:0007669"/>
    <property type="project" value="TreeGrafter"/>
</dbReference>
<dbReference type="GO" id="GO:0050897">
    <property type="term" value="F:cobalt ion binding"/>
    <property type="evidence" value="ECO:0007669"/>
    <property type="project" value="UniProtKB-UniRule"/>
</dbReference>
<dbReference type="GO" id="GO:0009014">
    <property type="term" value="F:succinyl-diaminopimelate desuccinylase activity"/>
    <property type="evidence" value="ECO:0007669"/>
    <property type="project" value="UniProtKB-UniRule"/>
</dbReference>
<dbReference type="GO" id="GO:0008270">
    <property type="term" value="F:zinc ion binding"/>
    <property type="evidence" value="ECO:0007669"/>
    <property type="project" value="UniProtKB-UniRule"/>
</dbReference>
<dbReference type="GO" id="GO:0019877">
    <property type="term" value="P:diaminopimelate biosynthetic process"/>
    <property type="evidence" value="ECO:0007669"/>
    <property type="project" value="UniProtKB-UniRule"/>
</dbReference>
<dbReference type="GO" id="GO:0006526">
    <property type="term" value="P:L-arginine biosynthetic process"/>
    <property type="evidence" value="ECO:0007669"/>
    <property type="project" value="TreeGrafter"/>
</dbReference>
<dbReference type="GO" id="GO:0009089">
    <property type="term" value="P:lysine biosynthetic process via diaminopimelate"/>
    <property type="evidence" value="ECO:0007669"/>
    <property type="project" value="UniProtKB-UniRule"/>
</dbReference>
<dbReference type="CDD" id="cd03891">
    <property type="entry name" value="M20_DapE_proteobac"/>
    <property type="match status" value="1"/>
</dbReference>
<dbReference type="Gene3D" id="3.40.630.10">
    <property type="entry name" value="Zn peptidases"/>
    <property type="match status" value="2"/>
</dbReference>
<dbReference type="HAMAP" id="MF_01690">
    <property type="entry name" value="DapE"/>
    <property type="match status" value="1"/>
</dbReference>
<dbReference type="InterPro" id="IPR001261">
    <property type="entry name" value="ArgE/DapE_CS"/>
</dbReference>
<dbReference type="InterPro" id="IPR036264">
    <property type="entry name" value="Bact_exopeptidase_dim_dom"/>
</dbReference>
<dbReference type="InterPro" id="IPR005941">
    <property type="entry name" value="DapE_proteobac"/>
</dbReference>
<dbReference type="InterPro" id="IPR002933">
    <property type="entry name" value="Peptidase_M20"/>
</dbReference>
<dbReference type="InterPro" id="IPR011650">
    <property type="entry name" value="Peptidase_M20_dimer"/>
</dbReference>
<dbReference type="InterPro" id="IPR050072">
    <property type="entry name" value="Peptidase_M20A"/>
</dbReference>
<dbReference type="NCBIfam" id="TIGR01246">
    <property type="entry name" value="dapE_proteo"/>
    <property type="match status" value="1"/>
</dbReference>
<dbReference type="NCBIfam" id="NF009557">
    <property type="entry name" value="PRK13009.1"/>
    <property type="match status" value="1"/>
</dbReference>
<dbReference type="PANTHER" id="PTHR43808">
    <property type="entry name" value="ACETYLORNITHINE DEACETYLASE"/>
    <property type="match status" value="1"/>
</dbReference>
<dbReference type="PANTHER" id="PTHR43808:SF31">
    <property type="entry name" value="N-ACETYL-L-CITRULLINE DEACETYLASE"/>
    <property type="match status" value="1"/>
</dbReference>
<dbReference type="Pfam" id="PF07687">
    <property type="entry name" value="M20_dimer"/>
    <property type="match status" value="1"/>
</dbReference>
<dbReference type="Pfam" id="PF01546">
    <property type="entry name" value="Peptidase_M20"/>
    <property type="match status" value="1"/>
</dbReference>
<dbReference type="SUPFAM" id="SSF55031">
    <property type="entry name" value="Bacterial exopeptidase dimerisation domain"/>
    <property type="match status" value="1"/>
</dbReference>
<dbReference type="SUPFAM" id="SSF53187">
    <property type="entry name" value="Zn-dependent exopeptidases"/>
    <property type="match status" value="1"/>
</dbReference>
<dbReference type="PROSITE" id="PS00759">
    <property type="entry name" value="ARGE_DAPE_CPG2_2"/>
    <property type="match status" value="1"/>
</dbReference>
<gene>
    <name evidence="1" type="primary">dapE</name>
    <name type="ordered locus">Pden_2842</name>
</gene>
<sequence>MTPIPDPAQLTARLIRCASVTPDEGGALVLLADVLGAAGFECHRVDREGVPNLFARWGAQGARTFGFNGHTDVVPPGDPASWTHPPFSGHEAEGWIWGRGATDMKSGVAAFAAAAIGFVTQTPPPDGAVILAITGDEEGPGKHGTRALLDWMAARGERMDVCIVGEPSNPDRMGEMIKIGRRGSMTLQIEAHGIQGHAAYPHRARNPIHALLRLLHELTDAPLDEGTEHFDPSGLQVTTVDCGNPASNVIPERARAVINIRFNDAHTAESLDRMIRARAAAISAETKVDFAISTDVSGESFLTAPGPFVDLVAGVVREETGLDPVLSTSGGTSDARFVKDHCPVLEFGLVGHFMHQVDERVPADQVRQLARIYRRILERYFA</sequence>
<protein>
    <recommendedName>
        <fullName evidence="1">Succinyl-diaminopimelate desuccinylase</fullName>
        <shortName evidence="1">SDAP desuccinylase</shortName>
        <ecNumber evidence="1">3.5.1.18</ecNumber>
    </recommendedName>
    <alternativeName>
        <fullName evidence="1">N-succinyl-LL-2,6-diaminoheptanedioate amidohydrolase</fullName>
    </alternativeName>
</protein>